<organism>
    <name type="scientific">Clostridium botulinum (strain Kyoto / Type A2)</name>
    <dbReference type="NCBI Taxonomy" id="536232"/>
    <lineage>
        <taxon>Bacteria</taxon>
        <taxon>Bacillati</taxon>
        <taxon>Bacillota</taxon>
        <taxon>Clostridia</taxon>
        <taxon>Eubacteriales</taxon>
        <taxon>Clostridiaceae</taxon>
        <taxon>Clostridium</taxon>
    </lineage>
</organism>
<proteinExistence type="inferred from homology"/>
<sequence length="160" mass="17946">MSEAKKYVMTYEGVKKLEEELEFLKTVKRKEITEKIKVALSFGDLSENSEYDEAKNEQAFVEGRIIQLENMLKNASIVDENEVPKDIVSVGSIVKVKDYEFDEEVEYIIVGSAEADPMNNKISNESPVGHGLIGKKVGDIIEVTVPDGVSKYEILEVNRA</sequence>
<comment type="function">
    <text evidence="1">Necessary for efficient RNA polymerase transcription elongation past template-encoded arresting sites. The arresting sites in DNA have the property of trapping a certain fraction of elongating RNA polymerases that pass through, resulting in locked ternary complexes. Cleavage of the nascent transcript by cleavage factors such as GreA or GreB allows the resumption of elongation from the new 3'terminus. GreA releases sequences of 2 to 3 nucleotides.</text>
</comment>
<comment type="similarity">
    <text evidence="1">Belongs to the GreA/GreB family.</text>
</comment>
<evidence type="ECO:0000255" key="1">
    <source>
        <dbReference type="HAMAP-Rule" id="MF_00105"/>
    </source>
</evidence>
<gene>
    <name evidence="1" type="primary">greA</name>
    <name type="ordered locus">CLM_4005</name>
</gene>
<protein>
    <recommendedName>
        <fullName evidence="1">Transcription elongation factor GreA</fullName>
    </recommendedName>
    <alternativeName>
        <fullName evidence="1">Transcript cleavage factor GreA</fullName>
    </alternativeName>
</protein>
<name>GREA_CLOBJ</name>
<dbReference type="EMBL" id="CP001581">
    <property type="protein sequence ID" value="ACO84451.1"/>
    <property type="molecule type" value="Genomic_DNA"/>
</dbReference>
<dbReference type="RefSeq" id="WP_003359344.1">
    <property type="nucleotide sequence ID" value="NC_012563.1"/>
</dbReference>
<dbReference type="SMR" id="C1FNC6"/>
<dbReference type="KEGG" id="cby:CLM_4005"/>
<dbReference type="eggNOG" id="COG0782">
    <property type="taxonomic scope" value="Bacteria"/>
</dbReference>
<dbReference type="HOGENOM" id="CLU_101379_2_1_9"/>
<dbReference type="Proteomes" id="UP000001374">
    <property type="component" value="Chromosome"/>
</dbReference>
<dbReference type="GO" id="GO:0003677">
    <property type="term" value="F:DNA binding"/>
    <property type="evidence" value="ECO:0007669"/>
    <property type="project" value="UniProtKB-UniRule"/>
</dbReference>
<dbReference type="GO" id="GO:0070063">
    <property type="term" value="F:RNA polymerase binding"/>
    <property type="evidence" value="ECO:0007669"/>
    <property type="project" value="InterPro"/>
</dbReference>
<dbReference type="GO" id="GO:0006354">
    <property type="term" value="P:DNA-templated transcription elongation"/>
    <property type="evidence" value="ECO:0007669"/>
    <property type="project" value="TreeGrafter"/>
</dbReference>
<dbReference type="GO" id="GO:0032784">
    <property type="term" value="P:regulation of DNA-templated transcription elongation"/>
    <property type="evidence" value="ECO:0007669"/>
    <property type="project" value="UniProtKB-UniRule"/>
</dbReference>
<dbReference type="FunFam" id="1.10.287.180:FF:000001">
    <property type="entry name" value="Transcription elongation factor GreA"/>
    <property type="match status" value="1"/>
</dbReference>
<dbReference type="FunFam" id="3.10.50.30:FF:000001">
    <property type="entry name" value="Transcription elongation factor GreA"/>
    <property type="match status" value="1"/>
</dbReference>
<dbReference type="Gene3D" id="3.10.50.30">
    <property type="entry name" value="Transcription elongation factor, GreA/GreB, C-terminal domain"/>
    <property type="match status" value="1"/>
</dbReference>
<dbReference type="Gene3D" id="1.10.287.180">
    <property type="entry name" value="Transcription elongation factor, GreA/GreB, N-terminal domain"/>
    <property type="match status" value="1"/>
</dbReference>
<dbReference type="HAMAP" id="MF_00105">
    <property type="entry name" value="GreA_GreB"/>
    <property type="match status" value="1"/>
</dbReference>
<dbReference type="InterPro" id="IPR036953">
    <property type="entry name" value="GreA/GreB_C_sf"/>
</dbReference>
<dbReference type="InterPro" id="IPR018151">
    <property type="entry name" value="TF_GreA/GreB_CS"/>
</dbReference>
<dbReference type="InterPro" id="IPR006359">
    <property type="entry name" value="Tscrpt_elong_fac_GreA"/>
</dbReference>
<dbReference type="InterPro" id="IPR028624">
    <property type="entry name" value="Tscrpt_elong_fac_GreA/B"/>
</dbReference>
<dbReference type="InterPro" id="IPR001437">
    <property type="entry name" value="Tscrpt_elong_fac_GreA/B_C"/>
</dbReference>
<dbReference type="InterPro" id="IPR023459">
    <property type="entry name" value="Tscrpt_elong_fac_GreA/B_fam"/>
</dbReference>
<dbReference type="InterPro" id="IPR022691">
    <property type="entry name" value="Tscrpt_elong_fac_GreA/B_N"/>
</dbReference>
<dbReference type="InterPro" id="IPR036805">
    <property type="entry name" value="Tscrpt_elong_fac_GreA/B_N_sf"/>
</dbReference>
<dbReference type="NCBIfam" id="TIGR01462">
    <property type="entry name" value="greA"/>
    <property type="match status" value="1"/>
</dbReference>
<dbReference type="NCBIfam" id="NF001261">
    <property type="entry name" value="PRK00226.1-2"/>
    <property type="match status" value="1"/>
</dbReference>
<dbReference type="NCBIfam" id="NF001263">
    <property type="entry name" value="PRK00226.1-4"/>
    <property type="match status" value="1"/>
</dbReference>
<dbReference type="PANTHER" id="PTHR30437">
    <property type="entry name" value="TRANSCRIPTION ELONGATION FACTOR GREA"/>
    <property type="match status" value="1"/>
</dbReference>
<dbReference type="PANTHER" id="PTHR30437:SF4">
    <property type="entry name" value="TRANSCRIPTION ELONGATION FACTOR GREA"/>
    <property type="match status" value="1"/>
</dbReference>
<dbReference type="Pfam" id="PF01272">
    <property type="entry name" value="GreA_GreB"/>
    <property type="match status" value="1"/>
</dbReference>
<dbReference type="Pfam" id="PF03449">
    <property type="entry name" value="GreA_GreB_N"/>
    <property type="match status" value="1"/>
</dbReference>
<dbReference type="PIRSF" id="PIRSF006092">
    <property type="entry name" value="GreA_GreB"/>
    <property type="match status" value="1"/>
</dbReference>
<dbReference type="SUPFAM" id="SSF54534">
    <property type="entry name" value="FKBP-like"/>
    <property type="match status" value="1"/>
</dbReference>
<dbReference type="SUPFAM" id="SSF46557">
    <property type="entry name" value="GreA transcript cleavage protein, N-terminal domain"/>
    <property type="match status" value="1"/>
</dbReference>
<dbReference type="PROSITE" id="PS00829">
    <property type="entry name" value="GREAB_1"/>
    <property type="match status" value="1"/>
</dbReference>
<dbReference type="PROSITE" id="PS00830">
    <property type="entry name" value="GREAB_2"/>
    <property type="match status" value="1"/>
</dbReference>
<keyword id="KW-0175">Coiled coil</keyword>
<keyword id="KW-0238">DNA-binding</keyword>
<keyword id="KW-0804">Transcription</keyword>
<keyword id="KW-0805">Transcription regulation</keyword>
<accession>C1FNC6</accession>
<reference key="1">
    <citation type="submission" date="2008-10" db="EMBL/GenBank/DDBJ databases">
        <title>Genome sequence of Clostridium botulinum A2 Kyoto.</title>
        <authorList>
            <person name="Shrivastava S."/>
            <person name="Brinkac L.M."/>
            <person name="Brown J.L."/>
            <person name="Bruce D."/>
            <person name="Detter C.C."/>
            <person name="Johnson E.A."/>
            <person name="Munk C.A."/>
            <person name="Smith L.A."/>
            <person name="Smith T.J."/>
            <person name="Sutton G."/>
            <person name="Brettin T.S."/>
        </authorList>
    </citation>
    <scope>NUCLEOTIDE SEQUENCE [LARGE SCALE GENOMIC DNA]</scope>
    <source>
        <strain>Kyoto / Type A2</strain>
    </source>
</reference>
<feature type="chain" id="PRO_1000118956" description="Transcription elongation factor GreA">
    <location>
        <begin position="1"/>
        <end position="160"/>
    </location>
</feature>
<feature type="coiled-coil region" evidence="1">
    <location>
        <begin position="12"/>
        <end position="76"/>
    </location>
</feature>